<comment type="catalytic activity">
    <reaction evidence="1">
        <text>D-erythro-1-(imidazol-4-yl)glycerol 3-phosphate = 3-(imidazol-4-yl)-2-oxopropyl phosphate + H2O</text>
        <dbReference type="Rhea" id="RHEA:11040"/>
        <dbReference type="ChEBI" id="CHEBI:15377"/>
        <dbReference type="ChEBI" id="CHEBI:57766"/>
        <dbReference type="ChEBI" id="CHEBI:58278"/>
        <dbReference type="EC" id="4.2.1.19"/>
    </reaction>
</comment>
<comment type="pathway">
    <text evidence="1">Amino-acid biosynthesis; L-histidine biosynthesis; L-histidine from 5-phospho-alpha-D-ribose 1-diphosphate: step 6/9.</text>
</comment>
<comment type="subcellular location">
    <subcellularLocation>
        <location evidence="1">Cytoplasm</location>
    </subcellularLocation>
</comment>
<comment type="similarity">
    <text evidence="1">Belongs to the imidazoleglycerol-phosphate dehydratase family.</text>
</comment>
<name>HIS7_CLOBA</name>
<dbReference type="EC" id="4.2.1.19" evidence="1"/>
<dbReference type="EMBL" id="CP001078">
    <property type="protein sequence ID" value="ACD53493.1"/>
    <property type="molecule type" value="Genomic_DNA"/>
</dbReference>
<dbReference type="RefSeq" id="WP_012451384.1">
    <property type="nucleotide sequence ID" value="NC_010723.1"/>
</dbReference>
<dbReference type="SMR" id="B2UX23"/>
<dbReference type="KEGG" id="cbt:CLH_2628"/>
<dbReference type="HOGENOM" id="CLU_044308_3_0_9"/>
<dbReference type="UniPathway" id="UPA00031">
    <property type="reaction ID" value="UER00011"/>
</dbReference>
<dbReference type="GO" id="GO:0005737">
    <property type="term" value="C:cytoplasm"/>
    <property type="evidence" value="ECO:0007669"/>
    <property type="project" value="UniProtKB-SubCell"/>
</dbReference>
<dbReference type="GO" id="GO:0004424">
    <property type="term" value="F:imidazoleglycerol-phosphate dehydratase activity"/>
    <property type="evidence" value="ECO:0007669"/>
    <property type="project" value="UniProtKB-UniRule"/>
</dbReference>
<dbReference type="GO" id="GO:0000105">
    <property type="term" value="P:L-histidine biosynthetic process"/>
    <property type="evidence" value="ECO:0007669"/>
    <property type="project" value="UniProtKB-UniRule"/>
</dbReference>
<dbReference type="CDD" id="cd07914">
    <property type="entry name" value="IGPD"/>
    <property type="match status" value="1"/>
</dbReference>
<dbReference type="FunFam" id="3.30.230.40:FF:000001">
    <property type="entry name" value="Imidazoleglycerol-phosphate dehydratase HisB"/>
    <property type="match status" value="1"/>
</dbReference>
<dbReference type="FunFam" id="3.30.230.40:FF:000003">
    <property type="entry name" value="Imidazoleglycerol-phosphate dehydratase HisB"/>
    <property type="match status" value="1"/>
</dbReference>
<dbReference type="Gene3D" id="3.30.230.40">
    <property type="entry name" value="Imidazole glycerol phosphate dehydratase, domain 1"/>
    <property type="match status" value="2"/>
</dbReference>
<dbReference type="HAMAP" id="MF_00076">
    <property type="entry name" value="HisB"/>
    <property type="match status" value="1"/>
</dbReference>
<dbReference type="InterPro" id="IPR038494">
    <property type="entry name" value="IGPD_sf"/>
</dbReference>
<dbReference type="InterPro" id="IPR000807">
    <property type="entry name" value="ImidazoleglycerolP_deHydtase"/>
</dbReference>
<dbReference type="InterPro" id="IPR020565">
    <property type="entry name" value="ImidazoleglycerP_deHydtase_CS"/>
</dbReference>
<dbReference type="InterPro" id="IPR020568">
    <property type="entry name" value="Ribosomal_Su5_D2-typ_SF"/>
</dbReference>
<dbReference type="NCBIfam" id="NF002107">
    <property type="entry name" value="PRK00951.1-2"/>
    <property type="match status" value="1"/>
</dbReference>
<dbReference type="NCBIfam" id="NF002111">
    <property type="entry name" value="PRK00951.2-1"/>
    <property type="match status" value="1"/>
</dbReference>
<dbReference type="NCBIfam" id="NF002114">
    <property type="entry name" value="PRK00951.2-4"/>
    <property type="match status" value="1"/>
</dbReference>
<dbReference type="PANTHER" id="PTHR23133:SF2">
    <property type="entry name" value="IMIDAZOLEGLYCEROL-PHOSPHATE DEHYDRATASE"/>
    <property type="match status" value="1"/>
</dbReference>
<dbReference type="PANTHER" id="PTHR23133">
    <property type="entry name" value="IMIDAZOLEGLYCEROL-PHOSPHATE DEHYDRATASE HIS7"/>
    <property type="match status" value="1"/>
</dbReference>
<dbReference type="Pfam" id="PF00475">
    <property type="entry name" value="IGPD"/>
    <property type="match status" value="1"/>
</dbReference>
<dbReference type="SUPFAM" id="SSF54211">
    <property type="entry name" value="Ribosomal protein S5 domain 2-like"/>
    <property type="match status" value="2"/>
</dbReference>
<dbReference type="PROSITE" id="PS00955">
    <property type="entry name" value="IGP_DEHYDRATASE_2"/>
    <property type="match status" value="1"/>
</dbReference>
<organism>
    <name type="scientific">Clostridium botulinum (strain Alaska E43 / Type E3)</name>
    <dbReference type="NCBI Taxonomy" id="508767"/>
    <lineage>
        <taxon>Bacteria</taxon>
        <taxon>Bacillati</taxon>
        <taxon>Bacillota</taxon>
        <taxon>Clostridia</taxon>
        <taxon>Eubacteriales</taxon>
        <taxon>Clostridiaceae</taxon>
        <taxon>Clostridium</taxon>
    </lineage>
</organism>
<feature type="chain" id="PRO_1000092684" description="Imidazoleglycerol-phosphate dehydratase">
    <location>
        <begin position="1"/>
        <end position="195"/>
    </location>
</feature>
<proteinExistence type="inferred from homology"/>
<reference key="1">
    <citation type="submission" date="2008-05" db="EMBL/GenBank/DDBJ databases">
        <title>Complete genome sequence of Clostridium botulinum E3 str. Alaska E43.</title>
        <authorList>
            <person name="Brinkac L.M."/>
            <person name="Brown J.L."/>
            <person name="Bruce D."/>
            <person name="Detter C."/>
            <person name="Munk C."/>
            <person name="Smith L.A."/>
            <person name="Smith T.J."/>
            <person name="Sutton G."/>
            <person name="Brettin T.S."/>
        </authorList>
    </citation>
    <scope>NUCLEOTIDE SEQUENCE [LARGE SCALE GENOMIC DNA]</scope>
    <source>
        <strain>Alaska E43 / Type E3</strain>
    </source>
</reference>
<gene>
    <name evidence="1" type="primary">hisB</name>
    <name type="ordered locus">CLH_2628</name>
</gene>
<keyword id="KW-0028">Amino-acid biosynthesis</keyword>
<keyword id="KW-0963">Cytoplasm</keyword>
<keyword id="KW-0368">Histidine biosynthesis</keyword>
<keyword id="KW-0456">Lyase</keyword>
<evidence type="ECO:0000255" key="1">
    <source>
        <dbReference type="HAMAP-Rule" id="MF_00076"/>
    </source>
</evidence>
<accession>B2UX23</accession>
<sequence length="195" mass="22049">MQNRIAKIERNTSETKVKIDINLDGTGLNKIHTGIGFLDHMLELFSFHSNTDVYLSCDGDLNVCDHHSVEDVGIIFGKAFKEALGDKKGINRYGTFFLPMDEVLSLISLDISGRGFLVFDCEFTREKVGELSTEMIEEFFRAFALNSEITLHCKVLYGKNDHHKIESLFKGFGRALRDAKERNELNKVPSTKGIL</sequence>
<protein>
    <recommendedName>
        <fullName evidence="1">Imidazoleglycerol-phosphate dehydratase</fullName>
        <shortName evidence="1">IGPD</shortName>
        <ecNumber evidence="1">4.2.1.19</ecNumber>
    </recommendedName>
</protein>